<organism>
    <name type="scientific">Synechocystis sp. (strain ATCC 27184 / PCC 6803 / Kazusa)</name>
    <dbReference type="NCBI Taxonomy" id="1111708"/>
    <lineage>
        <taxon>Bacteria</taxon>
        <taxon>Bacillati</taxon>
        <taxon>Cyanobacteriota</taxon>
        <taxon>Cyanophyceae</taxon>
        <taxon>Synechococcales</taxon>
        <taxon>Merismopediaceae</taxon>
        <taxon>Synechocystis</taxon>
    </lineage>
</organism>
<gene>
    <name type="ordered locus">slr0180</name>
</gene>
<gene>
    <name type="ordered locus">sll1474</name>
</gene>
<gene>
    <name type="ordered locus">slr1635</name>
</gene>
<gene>
    <name type="ordered locus">sll1780</name>
</gene>
<keyword id="KW-0233">DNA recombination</keyword>
<keyword id="KW-0238">DNA-binding</keyword>
<keyword id="KW-1185">Reference proteome</keyword>
<keyword id="KW-0814">Transposable element</keyword>
<keyword id="KW-0815">Transposition</keyword>
<sequence>MISNFGHIVKTYLSNFPKDDYPVLDTFKFVSIWLGLVLDQSQTSMRSMFKRLNLRGETVDISTFSKASKKRDVGVFREIIFSLKKELSKRKEIKQGELEIFPLDSTIVSITSKLMWNLGFHQVKVFSGINLSTGIPGGIVIHFGQGHDNKYGNETIEETPENGVAVMDRGFCDLQRIKRLQKENNKYHVLRIKNNIKLEKLANDNYMVGTGKNKIESRVVIFTHDNSEFRLVTNLPIESKEIEGVSDEKIAEIYKKRWQIELLWKFLKMHLKLNRLIAKNENAIGIQIYTCIIAYLILKLLVIPKEAGTTMLDKLRYLQAFMCEKISYVHWLRELALR</sequence>
<protein>
    <recommendedName>
        <fullName>Putative transposase for insertion sequence element IS4SA</fullName>
    </recommendedName>
</protein>
<name>T4SA_SYNY3</name>
<feature type="chain" id="PRO_0000173304" description="Putative transposase for insertion sequence element IS4SA">
    <location>
        <begin position="1"/>
        <end position="338"/>
    </location>
</feature>
<comment type="similarity">
    <text evidence="1">Belongs to the transposase 11 family.</text>
</comment>
<accession>Q55566</accession>
<accession>Q55067</accession>
<evidence type="ECO:0000305" key="1"/>
<proteinExistence type="inferred from homology"/>
<reference key="1">
    <citation type="journal article" date="1995" name="DNA Res.">
        <title>Sequence analysis of the genome of the unicellular cyanobacterium Synechocystis sp. strain PCC6803. I. Sequence features in the 1 Mb region from map positions 64% to 92% of the genome.</title>
        <authorList>
            <person name="Kaneko T."/>
            <person name="Tanaka A."/>
            <person name="Sato S."/>
            <person name="Kotani H."/>
            <person name="Sazuka T."/>
            <person name="Miyajima N."/>
            <person name="Sugiura M."/>
            <person name="Tabata S."/>
        </authorList>
    </citation>
    <scope>NUCLEOTIDE SEQUENCE [LARGE SCALE GENOMIC DNA]</scope>
    <source>
        <strain>ATCC 27184 / PCC 6803 / N-1</strain>
    </source>
</reference>
<reference key="2">
    <citation type="journal article" date="1996" name="DNA Res.">
        <title>Sequence analysis of the genome of the unicellular cyanobacterium Synechocystis sp. strain PCC6803. II. Sequence determination of the entire genome and assignment of potential protein-coding regions.</title>
        <authorList>
            <person name="Kaneko T."/>
            <person name="Sato S."/>
            <person name="Kotani H."/>
            <person name="Tanaka A."/>
            <person name="Asamizu E."/>
            <person name="Nakamura Y."/>
            <person name="Miyajima N."/>
            <person name="Hirosawa M."/>
            <person name="Sugiura M."/>
            <person name="Sasamoto S."/>
            <person name="Kimura T."/>
            <person name="Hosouchi T."/>
            <person name="Matsuno A."/>
            <person name="Muraki A."/>
            <person name="Nakazaki N."/>
            <person name="Naruo K."/>
            <person name="Okumura S."/>
            <person name="Shimpo S."/>
            <person name="Takeuchi C."/>
            <person name="Wada T."/>
            <person name="Watanabe A."/>
            <person name="Yamada M."/>
            <person name="Yasuda M."/>
            <person name="Tabata S."/>
        </authorList>
    </citation>
    <scope>NUCLEOTIDE SEQUENCE [LARGE SCALE GENOMIC DNA]</scope>
    <source>
        <strain>ATCC 27184 / PCC 6803 / Kazusa</strain>
    </source>
</reference>
<reference key="3">
    <citation type="submission" date="1996-04" db="EMBL/GenBank/DDBJ databases">
        <authorList>
            <person name="Cassier-Chauvat C."/>
            <person name="Poncelet M."/>
            <person name="Villoing S."/>
            <person name="Chauvat F."/>
        </authorList>
    </citation>
    <scope>NUCLEOTIDE SEQUENCE [GENOMIC DNA] OF 185-338</scope>
</reference>
<dbReference type="EMBL" id="BA000022">
    <property type="protein sequence ID" value="BAA10067.1"/>
    <property type="molecule type" value="Genomic_DNA"/>
</dbReference>
<dbReference type="EMBL" id="BA000022">
    <property type="protein sequence ID" value="BAA17657.1"/>
    <property type="molecule type" value="Genomic_DNA"/>
</dbReference>
<dbReference type="EMBL" id="BA000022">
    <property type="protein sequence ID" value="BAA18447.1"/>
    <property type="molecule type" value="Genomic_DNA"/>
</dbReference>
<dbReference type="EMBL" id="BA000022">
    <property type="protein sequence ID" value="BAA18731.1"/>
    <property type="molecule type" value="Genomic_DNA"/>
</dbReference>
<dbReference type="EMBL" id="U38915">
    <property type="protein sequence ID" value="AAB72123.1"/>
    <property type="molecule type" value="Genomic_DNA"/>
</dbReference>
<dbReference type="PIR" id="S76089">
    <property type="entry name" value="S76089"/>
</dbReference>
<dbReference type="STRING" id="1148.gene:10498524"/>
<dbReference type="PaxDb" id="1148-1001443"/>
<dbReference type="EnsemblBacteria" id="BAA10067">
    <property type="protein sequence ID" value="BAA10067"/>
    <property type="gene ID" value="BAA10067"/>
</dbReference>
<dbReference type="EnsemblBacteria" id="BAA17657">
    <property type="protein sequence ID" value="BAA17657"/>
    <property type="gene ID" value="BAA17657"/>
</dbReference>
<dbReference type="EnsemblBacteria" id="BAA18447">
    <property type="protein sequence ID" value="BAA18447"/>
    <property type="gene ID" value="BAA18447"/>
</dbReference>
<dbReference type="EnsemblBacteria" id="BAA18731">
    <property type="protein sequence ID" value="BAA18731"/>
    <property type="gene ID" value="BAA18731"/>
</dbReference>
<dbReference type="KEGG" id="syn:sll1474"/>
<dbReference type="KEGG" id="syn:sll1780"/>
<dbReference type="KEGG" id="syn:slr0180"/>
<dbReference type="KEGG" id="syn:slr1635"/>
<dbReference type="eggNOG" id="COG3385">
    <property type="taxonomic scope" value="Bacteria"/>
</dbReference>
<dbReference type="InParanoid" id="Q55566"/>
<dbReference type="PhylomeDB" id="Q55566"/>
<dbReference type="Proteomes" id="UP000001425">
    <property type="component" value="Chromosome"/>
</dbReference>
<dbReference type="GO" id="GO:0003677">
    <property type="term" value="F:DNA binding"/>
    <property type="evidence" value="ECO:0007669"/>
    <property type="project" value="UniProtKB-KW"/>
</dbReference>
<dbReference type="GO" id="GO:0004803">
    <property type="term" value="F:transposase activity"/>
    <property type="evidence" value="ECO:0007669"/>
    <property type="project" value="InterPro"/>
</dbReference>
<dbReference type="GO" id="GO:0006313">
    <property type="term" value="P:DNA transposition"/>
    <property type="evidence" value="ECO:0007669"/>
    <property type="project" value="InterPro"/>
</dbReference>
<dbReference type="Gene3D" id="3.90.350.10">
    <property type="entry name" value="Transposase Inhibitor Protein From Tn5, Chain A, domain 1"/>
    <property type="match status" value="1"/>
</dbReference>
<dbReference type="InterPro" id="IPR012337">
    <property type="entry name" value="RNaseH-like_sf"/>
</dbReference>
<dbReference type="InterPro" id="IPR047952">
    <property type="entry name" value="Transpos_IS4"/>
</dbReference>
<dbReference type="InterPro" id="IPR002559">
    <property type="entry name" value="Transposase_11"/>
</dbReference>
<dbReference type="NCBIfam" id="NF033592">
    <property type="entry name" value="transpos_IS4_1"/>
    <property type="match status" value="1"/>
</dbReference>
<dbReference type="PANTHER" id="PTHR33258">
    <property type="entry name" value="TRANSPOSASE INSL FOR INSERTION SEQUENCE ELEMENT IS186A-RELATED"/>
    <property type="match status" value="1"/>
</dbReference>
<dbReference type="PANTHER" id="PTHR33258:SF1">
    <property type="entry name" value="TRANSPOSASE INSL FOR INSERTION SEQUENCE ELEMENT IS186A-RELATED"/>
    <property type="match status" value="1"/>
</dbReference>
<dbReference type="Pfam" id="PF01609">
    <property type="entry name" value="DDE_Tnp_1"/>
    <property type="match status" value="1"/>
</dbReference>
<dbReference type="SUPFAM" id="SSF53098">
    <property type="entry name" value="Ribonuclease H-like"/>
    <property type="match status" value="1"/>
</dbReference>